<protein>
    <recommendedName>
        <fullName evidence="2">Translation initiation factor IF-2</fullName>
    </recommendedName>
</protein>
<feature type="chain" id="PRO_0000335504" description="Translation initiation factor IF-2">
    <location>
        <begin position="1"/>
        <end position="738"/>
    </location>
</feature>
<feature type="domain" description="tr-type G">
    <location>
        <begin position="238"/>
        <end position="405"/>
    </location>
</feature>
<feature type="region of interest" description="Disordered" evidence="3">
    <location>
        <begin position="1"/>
        <end position="150"/>
    </location>
</feature>
<feature type="region of interest" description="G1" evidence="1">
    <location>
        <begin position="247"/>
        <end position="254"/>
    </location>
</feature>
<feature type="region of interest" description="G2" evidence="1">
    <location>
        <begin position="272"/>
        <end position="276"/>
    </location>
</feature>
<feature type="region of interest" description="G3" evidence="1">
    <location>
        <begin position="293"/>
        <end position="296"/>
    </location>
</feature>
<feature type="region of interest" description="G4" evidence="1">
    <location>
        <begin position="347"/>
        <end position="350"/>
    </location>
</feature>
<feature type="region of interest" description="G5" evidence="1">
    <location>
        <begin position="383"/>
        <end position="385"/>
    </location>
</feature>
<feature type="compositionally biased region" description="Polar residues" evidence="3">
    <location>
        <begin position="1"/>
        <end position="10"/>
    </location>
</feature>
<feature type="compositionally biased region" description="Gly residues" evidence="3">
    <location>
        <begin position="22"/>
        <end position="102"/>
    </location>
</feature>
<feature type="compositionally biased region" description="Basic and acidic residues" evidence="3">
    <location>
        <begin position="103"/>
        <end position="120"/>
    </location>
</feature>
<feature type="compositionally biased region" description="Low complexity" evidence="3">
    <location>
        <begin position="121"/>
        <end position="143"/>
    </location>
</feature>
<feature type="binding site" evidence="2">
    <location>
        <begin position="247"/>
        <end position="254"/>
    </location>
    <ligand>
        <name>GTP</name>
        <dbReference type="ChEBI" id="CHEBI:37565"/>
    </ligand>
</feature>
<feature type="binding site" evidence="2">
    <location>
        <begin position="293"/>
        <end position="297"/>
    </location>
    <ligand>
        <name>GTP</name>
        <dbReference type="ChEBI" id="CHEBI:37565"/>
    </ligand>
</feature>
<feature type="binding site" evidence="2">
    <location>
        <begin position="347"/>
        <end position="350"/>
    </location>
    <ligand>
        <name>GTP</name>
        <dbReference type="ChEBI" id="CHEBI:37565"/>
    </ligand>
</feature>
<proteinExistence type="inferred from homology"/>
<name>IF2_ROSCS</name>
<sequence length="738" mass="78190">MNSMRISGHQSAVDARDHIEFAGGGRGPGNPGGGRGPGSPGGGRGPGSPGGGRGPGSPGGGRGPGSPGGGRGPGSPGGGRGPGSPGGGRGPGGGRGPSGGRGGDGRRREESPTDHEDGRINRSGRSTSTTTTRTSSTLARPTTVRAPVRPKGPIALPVTMTVREFSEATGVGAAEILKALLKAGVVANINQQIDYETAAVIAADFGIETVEYVPPQLEGIVENIRDVLAAQDPKDLKPRPPVVTIMGHVDHGKTKLLDAIRSTRVAESEAGGITQHIGAYQVELHGRKITFLDTPGHEAFTAMRARGAQVTDIVVLVVAADDGVMPQTLEAISHVKAAGVPMIVAINKIDAPNANPDRVRQQLANAGVIVEQFGGDVPSVEVSAKLKKNIDGLLEMILLVADLNEYKANPNAPAVGTIVEAEMDRTRGPVATVLVQNGTLRLEDNVLVGATTGTIRTMFNDAGKRLRFAEPATPVVILGLNDVPQAGDILQVMPDLTVAREIALQRQRKQRLEAMASTRGVSLDGLFSSIQQGKIKELNIILKADVQGSIGAIEHALSQLNTDEVQIRIIHRGTGTITESDVNLAIASHAIIIGFNARPDPAARRQAEQYGVDIRFYNIIYQLTEDIKKAMIGMLEPEYREVTEGFAEVRTTFRLPTREIVAGLYVTEGKITRQYNVRVLRNGVVIHDGKIASLKRFKDDVREVQAGYECGLIVEGFNDITPGDTMEFYRRERVERTV</sequence>
<gene>
    <name evidence="2" type="primary">infB</name>
    <name type="ordered locus">Rcas_1132</name>
</gene>
<dbReference type="EMBL" id="CP000804">
    <property type="protein sequence ID" value="ABU57231.1"/>
    <property type="molecule type" value="Genomic_DNA"/>
</dbReference>
<dbReference type="RefSeq" id="WP_012119661.1">
    <property type="nucleotide sequence ID" value="NC_009767.1"/>
</dbReference>
<dbReference type="SMR" id="A7NID1"/>
<dbReference type="STRING" id="383372.Rcas_1132"/>
<dbReference type="KEGG" id="rca:Rcas_1132"/>
<dbReference type="eggNOG" id="COG0532">
    <property type="taxonomic scope" value="Bacteria"/>
</dbReference>
<dbReference type="HOGENOM" id="CLU_006301_5_1_0"/>
<dbReference type="OrthoDB" id="9811804at2"/>
<dbReference type="Proteomes" id="UP000000263">
    <property type="component" value="Chromosome"/>
</dbReference>
<dbReference type="GO" id="GO:0005829">
    <property type="term" value="C:cytosol"/>
    <property type="evidence" value="ECO:0007669"/>
    <property type="project" value="TreeGrafter"/>
</dbReference>
<dbReference type="GO" id="GO:0005525">
    <property type="term" value="F:GTP binding"/>
    <property type="evidence" value="ECO:0007669"/>
    <property type="project" value="UniProtKB-KW"/>
</dbReference>
<dbReference type="GO" id="GO:0003924">
    <property type="term" value="F:GTPase activity"/>
    <property type="evidence" value="ECO:0007669"/>
    <property type="project" value="UniProtKB-UniRule"/>
</dbReference>
<dbReference type="GO" id="GO:0003743">
    <property type="term" value="F:translation initiation factor activity"/>
    <property type="evidence" value="ECO:0007669"/>
    <property type="project" value="UniProtKB-UniRule"/>
</dbReference>
<dbReference type="CDD" id="cd01887">
    <property type="entry name" value="IF2_eIF5B"/>
    <property type="match status" value="1"/>
</dbReference>
<dbReference type="CDD" id="cd03702">
    <property type="entry name" value="IF2_mtIF2_II"/>
    <property type="match status" value="1"/>
</dbReference>
<dbReference type="CDD" id="cd03692">
    <property type="entry name" value="mtIF2_IVc"/>
    <property type="match status" value="1"/>
</dbReference>
<dbReference type="FunFam" id="2.40.30.10:FF:000008">
    <property type="entry name" value="Translation initiation factor IF-2"/>
    <property type="match status" value="1"/>
</dbReference>
<dbReference type="FunFam" id="2.40.30.10:FF:000054">
    <property type="entry name" value="Translation initiation factor IF-2"/>
    <property type="match status" value="1"/>
</dbReference>
<dbReference type="FunFam" id="3.40.50.10050:FF:000001">
    <property type="entry name" value="Translation initiation factor IF-2"/>
    <property type="match status" value="1"/>
</dbReference>
<dbReference type="FunFam" id="3.40.50.300:FF:000019">
    <property type="entry name" value="Translation initiation factor IF-2"/>
    <property type="match status" value="1"/>
</dbReference>
<dbReference type="Gene3D" id="3.40.50.300">
    <property type="entry name" value="P-loop containing nucleotide triphosphate hydrolases"/>
    <property type="match status" value="1"/>
</dbReference>
<dbReference type="Gene3D" id="2.40.30.10">
    <property type="entry name" value="Translation factors"/>
    <property type="match status" value="2"/>
</dbReference>
<dbReference type="Gene3D" id="3.40.50.10050">
    <property type="entry name" value="Translation initiation factor IF- 2, domain 3"/>
    <property type="match status" value="1"/>
</dbReference>
<dbReference type="HAMAP" id="MF_00100_B">
    <property type="entry name" value="IF_2_B"/>
    <property type="match status" value="1"/>
</dbReference>
<dbReference type="InterPro" id="IPR053905">
    <property type="entry name" value="EF-G-like_DII"/>
</dbReference>
<dbReference type="InterPro" id="IPR004161">
    <property type="entry name" value="EFTu-like_2"/>
</dbReference>
<dbReference type="InterPro" id="IPR044145">
    <property type="entry name" value="IF2_II"/>
</dbReference>
<dbReference type="InterPro" id="IPR006847">
    <property type="entry name" value="IF2_N"/>
</dbReference>
<dbReference type="InterPro" id="IPR027417">
    <property type="entry name" value="P-loop_NTPase"/>
</dbReference>
<dbReference type="InterPro" id="IPR005225">
    <property type="entry name" value="Small_GTP-bd"/>
</dbReference>
<dbReference type="InterPro" id="IPR000795">
    <property type="entry name" value="T_Tr_GTP-bd_dom"/>
</dbReference>
<dbReference type="InterPro" id="IPR000178">
    <property type="entry name" value="TF_IF2_bacterial-like"/>
</dbReference>
<dbReference type="InterPro" id="IPR015760">
    <property type="entry name" value="TIF_IF2"/>
</dbReference>
<dbReference type="InterPro" id="IPR023115">
    <property type="entry name" value="TIF_IF2_dom3"/>
</dbReference>
<dbReference type="InterPro" id="IPR036925">
    <property type="entry name" value="TIF_IF2_dom3_sf"/>
</dbReference>
<dbReference type="InterPro" id="IPR009000">
    <property type="entry name" value="Transl_B-barrel_sf"/>
</dbReference>
<dbReference type="NCBIfam" id="TIGR00487">
    <property type="entry name" value="IF-2"/>
    <property type="match status" value="1"/>
</dbReference>
<dbReference type="NCBIfam" id="TIGR00231">
    <property type="entry name" value="small_GTP"/>
    <property type="match status" value="1"/>
</dbReference>
<dbReference type="PANTHER" id="PTHR43381:SF5">
    <property type="entry name" value="TR-TYPE G DOMAIN-CONTAINING PROTEIN"/>
    <property type="match status" value="1"/>
</dbReference>
<dbReference type="PANTHER" id="PTHR43381">
    <property type="entry name" value="TRANSLATION INITIATION FACTOR IF-2-RELATED"/>
    <property type="match status" value="1"/>
</dbReference>
<dbReference type="Pfam" id="PF22042">
    <property type="entry name" value="EF-G_D2"/>
    <property type="match status" value="1"/>
</dbReference>
<dbReference type="Pfam" id="PF00009">
    <property type="entry name" value="GTP_EFTU"/>
    <property type="match status" value="1"/>
</dbReference>
<dbReference type="Pfam" id="PF03144">
    <property type="entry name" value="GTP_EFTU_D2"/>
    <property type="match status" value="1"/>
</dbReference>
<dbReference type="Pfam" id="PF11987">
    <property type="entry name" value="IF-2"/>
    <property type="match status" value="1"/>
</dbReference>
<dbReference type="Pfam" id="PF04760">
    <property type="entry name" value="IF2_N"/>
    <property type="match status" value="1"/>
</dbReference>
<dbReference type="SUPFAM" id="SSF52156">
    <property type="entry name" value="Initiation factor IF2/eIF5b, domain 3"/>
    <property type="match status" value="1"/>
</dbReference>
<dbReference type="SUPFAM" id="SSF52540">
    <property type="entry name" value="P-loop containing nucleoside triphosphate hydrolases"/>
    <property type="match status" value="1"/>
</dbReference>
<dbReference type="SUPFAM" id="SSF50447">
    <property type="entry name" value="Translation proteins"/>
    <property type="match status" value="2"/>
</dbReference>
<dbReference type="PROSITE" id="PS51722">
    <property type="entry name" value="G_TR_2"/>
    <property type="match status" value="1"/>
</dbReference>
<dbReference type="PROSITE" id="PS01176">
    <property type="entry name" value="IF2"/>
    <property type="match status" value="1"/>
</dbReference>
<comment type="function">
    <text evidence="2">One of the essential components for the initiation of protein synthesis. Protects formylmethionyl-tRNA from spontaneous hydrolysis and promotes its binding to the 30S ribosomal subunits. Also involved in the hydrolysis of GTP during the formation of the 70S ribosomal complex.</text>
</comment>
<comment type="subcellular location">
    <subcellularLocation>
        <location evidence="2">Cytoplasm</location>
    </subcellularLocation>
</comment>
<comment type="similarity">
    <text evidence="2">Belongs to the TRAFAC class translation factor GTPase superfamily. Classic translation factor GTPase family. IF-2 subfamily.</text>
</comment>
<accession>A7NID1</accession>
<evidence type="ECO:0000250" key="1"/>
<evidence type="ECO:0000255" key="2">
    <source>
        <dbReference type="HAMAP-Rule" id="MF_00100"/>
    </source>
</evidence>
<evidence type="ECO:0000256" key="3">
    <source>
        <dbReference type="SAM" id="MobiDB-lite"/>
    </source>
</evidence>
<organism>
    <name type="scientific">Roseiflexus castenholzii (strain DSM 13941 / HLO8)</name>
    <dbReference type="NCBI Taxonomy" id="383372"/>
    <lineage>
        <taxon>Bacteria</taxon>
        <taxon>Bacillati</taxon>
        <taxon>Chloroflexota</taxon>
        <taxon>Chloroflexia</taxon>
        <taxon>Chloroflexales</taxon>
        <taxon>Roseiflexineae</taxon>
        <taxon>Roseiflexaceae</taxon>
        <taxon>Roseiflexus</taxon>
    </lineage>
</organism>
<reference key="1">
    <citation type="submission" date="2007-08" db="EMBL/GenBank/DDBJ databases">
        <title>Complete sequence of Roseiflexus castenholzii DSM 13941.</title>
        <authorList>
            <consortium name="US DOE Joint Genome Institute"/>
            <person name="Copeland A."/>
            <person name="Lucas S."/>
            <person name="Lapidus A."/>
            <person name="Barry K."/>
            <person name="Glavina del Rio T."/>
            <person name="Dalin E."/>
            <person name="Tice H."/>
            <person name="Pitluck S."/>
            <person name="Thompson L.S."/>
            <person name="Brettin T."/>
            <person name="Bruce D."/>
            <person name="Detter J.C."/>
            <person name="Han C."/>
            <person name="Tapia R."/>
            <person name="Schmutz J."/>
            <person name="Larimer F."/>
            <person name="Land M."/>
            <person name="Hauser L."/>
            <person name="Kyrpides N."/>
            <person name="Mikhailova N."/>
            <person name="Bryant D.A."/>
            <person name="Hanada S."/>
            <person name="Tsukatani Y."/>
            <person name="Richardson P."/>
        </authorList>
    </citation>
    <scope>NUCLEOTIDE SEQUENCE [LARGE SCALE GENOMIC DNA]</scope>
    <source>
        <strain>DSM 13941 / HLO8</strain>
    </source>
</reference>
<keyword id="KW-0963">Cytoplasm</keyword>
<keyword id="KW-0342">GTP-binding</keyword>
<keyword id="KW-0396">Initiation factor</keyword>
<keyword id="KW-0547">Nucleotide-binding</keyword>
<keyword id="KW-0648">Protein biosynthesis</keyword>
<keyword id="KW-1185">Reference proteome</keyword>